<gene>
    <name evidence="2" type="primary">uup</name>
    <name type="synonym">uup-A</name>
    <name type="ordered locus">HI_1300</name>
</gene>
<dbReference type="EC" id="3.6.1.-" evidence="2"/>
<dbReference type="EMBL" id="L42023">
    <property type="protein sequence ID" value="AAC22945.1"/>
    <property type="molecule type" value="Genomic_DNA"/>
</dbReference>
<dbReference type="PIR" id="E64170">
    <property type="entry name" value="E64170"/>
</dbReference>
<dbReference type="RefSeq" id="NP_439451.1">
    <property type="nucleotide sequence ID" value="NC_000907.1"/>
</dbReference>
<dbReference type="SMR" id="Q57242"/>
<dbReference type="STRING" id="71421.HI_1300"/>
<dbReference type="EnsemblBacteria" id="AAC22945">
    <property type="protein sequence ID" value="AAC22945"/>
    <property type="gene ID" value="HI_1300"/>
</dbReference>
<dbReference type="KEGG" id="hin:HI_1300"/>
<dbReference type="PATRIC" id="fig|71421.8.peg.1352"/>
<dbReference type="eggNOG" id="COG0488">
    <property type="taxonomic scope" value="Bacteria"/>
</dbReference>
<dbReference type="HOGENOM" id="CLU_000604_36_0_6"/>
<dbReference type="OrthoDB" id="9762051at2"/>
<dbReference type="PhylomeDB" id="Q57242"/>
<dbReference type="BioCyc" id="HINF71421:G1GJ1-1325-MONOMER"/>
<dbReference type="Proteomes" id="UP000000579">
    <property type="component" value="Chromosome"/>
</dbReference>
<dbReference type="GO" id="GO:0005737">
    <property type="term" value="C:cytoplasm"/>
    <property type="evidence" value="ECO:0007669"/>
    <property type="project" value="UniProtKB-SubCell"/>
</dbReference>
<dbReference type="GO" id="GO:0005524">
    <property type="term" value="F:ATP binding"/>
    <property type="evidence" value="ECO:0007669"/>
    <property type="project" value="UniProtKB-UniRule"/>
</dbReference>
<dbReference type="GO" id="GO:0016887">
    <property type="term" value="F:ATP hydrolysis activity"/>
    <property type="evidence" value="ECO:0007669"/>
    <property type="project" value="UniProtKB-UniRule"/>
</dbReference>
<dbReference type="GO" id="GO:0003677">
    <property type="term" value="F:DNA binding"/>
    <property type="evidence" value="ECO:0007669"/>
    <property type="project" value="UniProtKB-UniRule"/>
</dbReference>
<dbReference type="GO" id="GO:0043022">
    <property type="term" value="F:ribosome binding"/>
    <property type="evidence" value="ECO:0007669"/>
    <property type="project" value="UniProtKB-UniRule"/>
</dbReference>
<dbReference type="GO" id="GO:0006281">
    <property type="term" value="P:DNA repair"/>
    <property type="evidence" value="ECO:0007669"/>
    <property type="project" value="UniProtKB-KW"/>
</dbReference>
<dbReference type="CDD" id="cd03221">
    <property type="entry name" value="ABCF_EF-3"/>
    <property type="match status" value="2"/>
</dbReference>
<dbReference type="FunFam" id="3.40.50.300:FF:000309">
    <property type="entry name" value="ABC transporter ATP-binding protein"/>
    <property type="match status" value="1"/>
</dbReference>
<dbReference type="FunFam" id="3.40.50.300:FF:000011">
    <property type="entry name" value="Putative ABC transporter ATP-binding component"/>
    <property type="match status" value="1"/>
</dbReference>
<dbReference type="Gene3D" id="3.40.50.300">
    <property type="entry name" value="P-loop containing nucleotide triphosphate hydrolases"/>
    <property type="match status" value="2"/>
</dbReference>
<dbReference type="Gene3D" id="1.10.287.380">
    <property type="entry name" value="Valyl-tRNA synthetase, C-terminal domain"/>
    <property type="match status" value="1"/>
</dbReference>
<dbReference type="HAMAP" id="MF_00848">
    <property type="entry name" value="Uup"/>
    <property type="match status" value="1"/>
</dbReference>
<dbReference type="InterPro" id="IPR003593">
    <property type="entry name" value="AAA+_ATPase"/>
</dbReference>
<dbReference type="InterPro" id="IPR032524">
    <property type="entry name" value="ABC_tran_C"/>
</dbReference>
<dbReference type="InterPro" id="IPR032781">
    <property type="entry name" value="ABC_tran_Xtn"/>
</dbReference>
<dbReference type="InterPro" id="IPR003439">
    <property type="entry name" value="ABC_transporter-like_ATP-bd"/>
</dbReference>
<dbReference type="InterPro" id="IPR017871">
    <property type="entry name" value="ABC_transporter-like_CS"/>
</dbReference>
<dbReference type="InterPro" id="IPR051309">
    <property type="entry name" value="ABCF_ATPase"/>
</dbReference>
<dbReference type="InterPro" id="IPR027417">
    <property type="entry name" value="P-loop_NTPase"/>
</dbReference>
<dbReference type="InterPro" id="IPR043686">
    <property type="entry name" value="Uup"/>
</dbReference>
<dbReference type="InterPro" id="IPR037118">
    <property type="entry name" value="Val-tRNA_synth_C_sf"/>
</dbReference>
<dbReference type="NCBIfam" id="NF008358">
    <property type="entry name" value="PRK11147.1"/>
    <property type="match status" value="1"/>
</dbReference>
<dbReference type="PANTHER" id="PTHR42855">
    <property type="entry name" value="ABC TRANSPORTER ATP-BINDING SUBUNIT"/>
    <property type="match status" value="1"/>
</dbReference>
<dbReference type="PANTHER" id="PTHR42855:SF1">
    <property type="entry name" value="ABC TRANSPORTER DOMAIN-CONTAINING PROTEIN"/>
    <property type="match status" value="1"/>
</dbReference>
<dbReference type="Pfam" id="PF00005">
    <property type="entry name" value="ABC_tran"/>
    <property type="match status" value="2"/>
</dbReference>
<dbReference type="Pfam" id="PF16326">
    <property type="entry name" value="ABC_tran_CTD"/>
    <property type="match status" value="1"/>
</dbReference>
<dbReference type="Pfam" id="PF12848">
    <property type="entry name" value="ABC_tran_Xtn"/>
    <property type="match status" value="1"/>
</dbReference>
<dbReference type="SMART" id="SM00382">
    <property type="entry name" value="AAA"/>
    <property type="match status" value="2"/>
</dbReference>
<dbReference type="SUPFAM" id="SSF52540">
    <property type="entry name" value="P-loop containing nucleoside triphosphate hydrolases"/>
    <property type="match status" value="2"/>
</dbReference>
<dbReference type="PROSITE" id="PS00211">
    <property type="entry name" value="ABC_TRANSPORTER_1"/>
    <property type="match status" value="2"/>
</dbReference>
<dbReference type="PROSITE" id="PS50893">
    <property type="entry name" value="ABC_TRANSPORTER_2"/>
    <property type="match status" value="2"/>
</dbReference>
<reference key="1">
    <citation type="journal article" date="1995" name="Science">
        <title>Whole-genome random sequencing and assembly of Haemophilus influenzae Rd.</title>
        <authorList>
            <person name="Fleischmann R.D."/>
            <person name="Adams M.D."/>
            <person name="White O."/>
            <person name="Clayton R.A."/>
            <person name="Kirkness E.F."/>
            <person name="Kerlavage A.R."/>
            <person name="Bult C.J."/>
            <person name="Tomb J.-F."/>
            <person name="Dougherty B.A."/>
            <person name="Merrick J.M."/>
            <person name="McKenney K."/>
            <person name="Sutton G.G."/>
            <person name="FitzHugh W."/>
            <person name="Fields C.A."/>
            <person name="Gocayne J.D."/>
            <person name="Scott J.D."/>
            <person name="Shirley R."/>
            <person name="Liu L.-I."/>
            <person name="Glodek A."/>
            <person name="Kelley J.M."/>
            <person name="Weidman J.F."/>
            <person name="Phillips C.A."/>
            <person name="Spriggs T."/>
            <person name="Hedblom E."/>
            <person name="Cotton M.D."/>
            <person name="Utterback T.R."/>
            <person name="Hanna M.C."/>
            <person name="Nguyen D.T."/>
            <person name="Saudek D.M."/>
            <person name="Brandon R.C."/>
            <person name="Fine L.D."/>
            <person name="Fritchman J.L."/>
            <person name="Fuhrmann J.L."/>
            <person name="Geoghagen N.S.M."/>
            <person name="Gnehm C.L."/>
            <person name="McDonald L.A."/>
            <person name="Small K.V."/>
            <person name="Fraser C.M."/>
            <person name="Smith H.O."/>
            <person name="Venter J.C."/>
        </authorList>
    </citation>
    <scope>NUCLEOTIDE SEQUENCE [LARGE SCALE GENOMIC DNA]</scope>
    <source>
        <strain>ATCC 51907 / DSM 11121 / KW20 / Rd</strain>
    </source>
</reference>
<proteinExistence type="inferred from homology"/>
<sequence length="647" mass="73268">MALISLTNGYLSFSDAPLLDHAELHIEPNECVCLVGRNGAGKSTLLKIIAGDVLMDDGKIQYEKDLVVSRLEQDPPRNAQGNIFDYVAEGVGHLTDLLKEYHQISVQLEENYSDQILSQLEQVQAKLEHADGWRFENKINEVLLKLGLNPNTKLSALSGGWLRKAALARALVCDPDVLLLDEPTNHLDVEAIEWLENFLLDFQGSIVFISHDRSFIRKMATRIVDLDRGQLVSYPGNYDLYLTTKEENLRVEALQNELFDKRLAQEEVWIRQGIKARRTRNEGRVRALKVMREERRQRRDVMGTAKLQLDTSSRSGKIVFEMEDVSYEIAGKTLLKDFSTTILRGDKIALVGPNGCGKTTFIKLLLGEIQPTSGKIRCGTKLEIAYFDQYRADLDPEKTVMDNVADGKQDIEINGVKRHVLGYLQDFLFPPKRAMTPVKALSGGERNRLLLAKLLLKPNNLLILDEPTNDLDVETLELLEEILTDYQGTLLIVSHDRQFIDNTATECYLFEGKGHLNKYVGGFFDAKQQQANFWASKAVEEQAKAKKSEPLKEESAVKNDRTSKPKSVKLSYKEQRELEQLPQLLEELETKITVLQAEIADPAFFQQAHDITDAKLKALADTEAELETAFLRWEELEEKKNLVEGKA</sequence>
<protein>
    <recommendedName>
        <fullName evidence="2">ATP-binding protein Uup</fullName>
        <ecNumber evidence="2">3.6.1.-</ecNumber>
    </recommendedName>
</protein>
<keyword id="KW-0067">ATP-binding</keyword>
<keyword id="KW-0963">Cytoplasm</keyword>
<keyword id="KW-0227">DNA damage</keyword>
<keyword id="KW-0234">DNA repair</keyword>
<keyword id="KW-0238">DNA-binding</keyword>
<keyword id="KW-0378">Hydrolase</keyword>
<keyword id="KW-0547">Nucleotide-binding</keyword>
<keyword id="KW-1185">Reference proteome</keyword>
<keyword id="KW-0677">Repeat</keyword>
<accession>Q57242</accession>
<accession>O05056</accession>
<organism>
    <name type="scientific">Haemophilus influenzae (strain ATCC 51907 / DSM 11121 / KW20 / Rd)</name>
    <dbReference type="NCBI Taxonomy" id="71421"/>
    <lineage>
        <taxon>Bacteria</taxon>
        <taxon>Pseudomonadati</taxon>
        <taxon>Pseudomonadota</taxon>
        <taxon>Gammaproteobacteria</taxon>
        <taxon>Pasteurellales</taxon>
        <taxon>Pasteurellaceae</taxon>
        <taxon>Haemophilus</taxon>
    </lineage>
</organism>
<name>UUP_HAEIN</name>
<feature type="chain" id="PRO_0000093030" description="ATP-binding protein Uup">
    <location>
        <begin position="1"/>
        <end position="647"/>
    </location>
</feature>
<feature type="domain" description="ABC transporter 1" evidence="2">
    <location>
        <begin position="1"/>
        <end position="253"/>
    </location>
</feature>
<feature type="domain" description="ABC transporter 2" evidence="2">
    <location>
        <begin position="320"/>
        <end position="546"/>
    </location>
</feature>
<feature type="region of interest" description="Disordered" evidence="3">
    <location>
        <begin position="545"/>
        <end position="569"/>
    </location>
</feature>
<feature type="region of interest" description="C-terminal domain (CTD), binds DNA" evidence="1">
    <location>
        <begin position="559"/>
        <end position="647"/>
    </location>
</feature>
<feature type="compositionally biased region" description="Basic and acidic residues" evidence="3">
    <location>
        <begin position="545"/>
        <end position="563"/>
    </location>
</feature>
<feature type="binding site" evidence="2">
    <location>
        <begin position="36"/>
        <end position="43"/>
    </location>
    <ligand>
        <name>ATP</name>
        <dbReference type="ChEBI" id="CHEBI:30616"/>
        <label>1</label>
    </ligand>
</feature>
<feature type="binding site" evidence="2">
    <location>
        <begin position="352"/>
        <end position="359"/>
    </location>
    <ligand>
        <name>ATP</name>
        <dbReference type="ChEBI" id="CHEBI:30616"/>
        <label>2</label>
    </ligand>
</feature>
<evidence type="ECO:0000250" key="1">
    <source>
        <dbReference type="UniProtKB" id="P43672"/>
    </source>
</evidence>
<evidence type="ECO:0000255" key="2">
    <source>
        <dbReference type="HAMAP-Rule" id="MF_00848"/>
    </source>
</evidence>
<evidence type="ECO:0000256" key="3">
    <source>
        <dbReference type="SAM" id="MobiDB-lite"/>
    </source>
</evidence>
<comment type="function">
    <text evidence="2">Probably plays a role in ribosome assembly or function. May be involved in resolution of branched DNA intermediates that result from template switching in postreplication gaps. Binds DNA and has ATPase activity.</text>
</comment>
<comment type="catalytic activity">
    <reaction evidence="2">
        <text>ATP + H2O = ADP + phosphate + H(+)</text>
        <dbReference type="Rhea" id="RHEA:13065"/>
        <dbReference type="ChEBI" id="CHEBI:15377"/>
        <dbReference type="ChEBI" id="CHEBI:15378"/>
        <dbReference type="ChEBI" id="CHEBI:30616"/>
        <dbReference type="ChEBI" id="CHEBI:43474"/>
        <dbReference type="ChEBI" id="CHEBI:456216"/>
    </reaction>
</comment>
<comment type="subcellular location">
    <subcellularLocation>
        <location evidence="2">Cytoplasm</location>
    </subcellularLocation>
    <text evidence="2">Associates with ribosomes.</text>
</comment>
<comment type="domain">
    <text evidence="1">The C-terminal domain (CTD) helps bind DNA.</text>
</comment>
<comment type="similarity">
    <text evidence="2">Belongs to the ABC transporter superfamily. ABCF family. Uup subfamily.</text>
</comment>